<accession>A4QDP9</accession>
<reference key="1">
    <citation type="journal article" date="2007" name="Microbiology">
        <title>Comparative analysis of the Corynebacterium glutamicum group and complete genome sequence of strain R.</title>
        <authorList>
            <person name="Yukawa H."/>
            <person name="Omumasaba C.A."/>
            <person name="Nonaka H."/>
            <person name="Kos P."/>
            <person name="Okai N."/>
            <person name="Suzuki N."/>
            <person name="Suda M."/>
            <person name="Tsuge Y."/>
            <person name="Watanabe J."/>
            <person name="Ikeda Y."/>
            <person name="Vertes A.A."/>
            <person name="Inui M."/>
        </authorList>
    </citation>
    <scope>NUCLEOTIDE SEQUENCE [LARGE SCALE GENOMIC DNA]</scope>
    <source>
        <strain>R</strain>
    </source>
</reference>
<proteinExistence type="inferred from homology"/>
<comment type="function">
    <text evidence="1">Catalyzes the oxidation of 3-carboxy-2-hydroxy-4-methylpentanoate (3-isopropylmalate) to 3-carboxy-4-methyl-2-oxopentanoate. The product decarboxylates to 4-methyl-2 oxopentanoate.</text>
</comment>
<comment type="catalytic activity">
    <reaction evidence="1">
        <text>(2R,3S)-3-isopropylmalate + NAD(+) = 4-methyl-2-oxopentanoate + CO2 + NADH</text>
        <dbReference type="Rhea" id="RHEA:32271"/>
        <dbReference type="ChEBI" id="CHEBI:16526"/>
        <dbReference type="ChEBI" id="CHEBI:17865"/>
        <dbReference type="ChEBI" id="CHEBI:35121"/>
        <dbReference type="ChEBI" id="CHEBI:57540"/>
        <dbReference type="ChEBI" id="CHEBI:57945"/>
        <dbReference type="EC" id="1.1.1.85"/>
    </reaction>
</comment>
<comment type="cofactor">
    <cofactor evidence="1">
        <name>Mg(2+)</name>
        <dbReference type="ChEBI" id="CHEBI:18420"/>
    </cofactor>
    <cofactor evidence="1">
        <name>Mn(2+)</name>
        <dbReference type="ChEBI" id="CHEBI:29035"/>
    </cofactor>
    <text evidence="1">Binds 1 Mg(2+) or Mn(2+) ion per subunit.</text>
</comment>
<comment type="pathway">
    <text evidence="1">Amino-acid biosynthesis; L-leucine biosynthesis; L-leucine from 3-methyl-2-oxobutanoate: step 3/4.</text>
</comment>
<comment type="subunit">
    <text evidence="1">Homodimer.</text>
</comment>
<comment type="subcellular location">
    <subcellularLocation>
        <location evidence="1">Cytoplasm</location>
    </subcellularLocation>
</comment>
<comment type="similarity">
    <text evidence="1">Belongs to the isocitrate and isopropylmalate dehydrogenases family. LeuB type 2 subfamily.</text>
</comment>
<sequence length="340" mass="36133">MKLAVIGGDGIGPEVTAEALKVLNAVRDDIETTDYDLGARRYLKNGELLTDEDLASLREHDAILLGAIGAPGSVPPGILERGLLLKMRFALDHHVNLRPSKLYDGVESPLRNPGKIDFVVVREGTEGAYTGNGGAIRVGTAHEIANETSVNTRYGAERVIRYAFELAQSRRKKLTLVHKTNVLVHGGGLWQRTVDEVAKEYPEVAVDYNHIDAATIYLITDPSRFDVIVTDNLFGDILTDEAGAVSGGIGLAASGNIDATGTNPSMFEPVHGSAPDIAGQGIADPTAAILSAAMLLRHLGDEDNAVRIETAIAADVAGRDNSQPISTTEVGDRIVKALQS</sequence>
<dbReference type="EC" id="1.1.1.85" evidence="1"/>
<dbReference type="EMBL" id="AP009044">
    <property type="protein sequence ID" value="BAF54346.1"/>
    <property type="molecule type" value="Genomic_DNA"/>
</dbReference>
<dbReference type="RefSeq" id="WP_003854077.1">
    <property type="nucleotide sequence ID" value="NC_009342.1"/>
</dbReference>
<dbReference type="SMR" id="A4QDP9"/>
<dbReference type="KEGG" id="cgt:cgR_1364"/>
<dbReference type="HOGENOM" id="CLU_031953_0_1_11"/>
<dbReference type="PhylomeDB" id="A4QDP9"/>
<dbReference type="UniPathway" id="UPA00048">
    <property type="reaction ID" value="UER00072"/>
</dbReference>
<dbReference type="Proteomes" id="UP000006698">
    <property type="component" value="Chromosome"/>
</dbReference>
<dbReference type="GO" id="GO:0005737">
    <property type="term" value="C:cytoplasm"/>
    <property type="evidence" value="ECO:0007669"/>
    <property type="project" value="UniProtKB-SubCell"/>
</dbReference>
<dbReference type="GO" id="GO:0003862">
    <property type="term" value="F:3-isopropylmalate dehydrogenase activity"/>
    <property type="evidence" value="ECO:0007669"/>
    <property type="project" value="UniProtKB-UniRule"/>
</dbReference>
<dbReference type="GO" id="GO:0000287">
    <property type="term" value="F:magnesium ion binding"/>
    <property type="evidence" value="ECO:0007669"/>
    <property type="project" value="InterPro"/>
</dbReference>
<dbReference type="GO" id="GO:0051287">
    <property type="term" value="F:NAD binding"/>
    <property type="evidence" value="ECO:0007669"/>
    <property type="project" value="InterPro"/>
</dbReference>
<dbReference type="GO" id="GO:0009098">
    <property type="term" value="P:L-leucine biosynthetic process"/>
    <property type="evidence" value="ECO:0007669"/>
    <property type="project" value="UniProtKB-UniRule"/>
</dbReference>
<dbReference type="Gene3D" id="3.40.718.10">
    <property type="entry name" value="Isopropylmalate Dehydrogenase"/>
    <property type="match status" value="1"/>
</dbReference>
<dbReference type="HAMAP" id="MF_01035">
    <property type="entry name" value="LeuB_type2"/>
    <property type="match status" value="1"/>
</dbReference>
<dbReference type="InterPro" id="IPR050501">
    <property type="entry name" value="ICDH/IPMDH"/>
</dbReference>
<dbReference type="InterPro" id="IPR019818">
    <property type="entry name" value="IsoCit/isopropylmalate_DH_CS"/>
</dbReference>
<dbReference type="InterPro" id="IPR024084">
    <property type="entry name" value="IsoPropMal-DH-like_dom"/>
</dbReference>
<dbReference type="InterPro" id="IPR023698">
    <property type="entry name" value="LeuB_actb"/>
</dbReference>
<dbReference type="NCBIfam" id="NF002898">
    <property type="entry name" value="PRK03437.1"/>
    <property type="match status" value="1"/>
</dbReference>
<dbReference type="PANTHER" id="PTHR43275">
    <property type="entry name" value="D-MALATE DEHYDROGENASE [DECARBOXYLATING]"/>
    <property type="match status" value="1"/>
</dbReference>
<dbReference type="PANTHER" id="PTHR43275:SF1">
    <property type="entry name" value="D-MALATE DEHYDROGENASE [DECARBOXYLATING]"/>
    <property type="match status" value="1"/>
</dbReference>
<dbReference type="Pfam" id="PF00180">
    <property type="entry name" value="Iso_dh"/>
    <property type="match status" value="1"/>
</dbReference>
<dbReference type="SMART" id="SM01329">
    <property type="entry name" value="Iso_dh"/>
    <property type="match status" value="1"/>
</dbReference>
<dbReference type="SUPFAM" id="SSF53659">
    <property type="entry name" value="Isocitrate/Isopropylmalate dehydrogenase-like"/>
    <property type="match status" value="1"/>
</dbReference>
<dbReference type="PROSITE" id="PS00470">
    <property type="entry name" value="IDH_IMDH"/>
    <property type="match status" value="1"/>
</dbReference>
<protein>
    <recommendedName>
        <fullName evidence="1">3-isopropylmalate dehydrogenase</fullName>
        <ecNumber evidence="1">1.1.1.85</ecNumber>
    </recommendedName>
    <alternativeName>
        <fullName evidence="1">3-IPM-DH</fullName>
    </alternativeName>
    <alternativeName>
        <fullName evidence="1">Beta-IPM dehydrogenase</fullName>
        <shortName evidence="1">IMDH</shortName>
    </alternativeName>
</protein>
<evidence type="ECO:0000255" key="1">
    <source>
        <dbReference type="HAMAP-Rule" id="MF_01035"/>
    </source>
</evidence>
<feature type="chain" id="PRO_1000063870" description="3-isopropylmalate dehydrogenase">
    <location>
        <begin position="1"/>
        <end position="340"/>
    </location>
</feature>
<feature type="binding site" evidence="1">
    <location>
        <position position="88"/>
    </location>
    <ligand>
        <name>substrate</name>
    </ligand>
</feature>
<feature type="binding site" evidence="1">
    <location>
        <position position="98"/>
    </location>
    <ligand>
        <name>substrate</name>
    </ligand>
</feature>
<feature type="binding site" evidence="1">
    <location>
        <position position="122"/>
    </location>
    <ligand>
        <name>substrate</name>
    </ligand>
</feature>
<feature type="binding site" evidence="1">
    <location>
        <position position="212"/>
    </location>
    <ligand>
        <name>Mg(2+)</name>
        <dbReference type="ChEBI" id="CHEBI:18420"/>
    </ligand>
</feature>
<feature type="binding site" evidence="1">
    <location>
        <position position="212"/>
    </location>
    <ligand>
        <name>substrate</name>
    </ligand>
</feature>
<feature type="binding site" evidence="1">
    <location>
        <position position="236"/>
    </location>
    <ligand>
        <name>Mg(2+)</name>
        <dbReference type="ChEBI" id="CHEBI:18420"/>
    </ligand>
</feature>
<feature type="binding site" evidence="1">
    <location>
        <position position="240"/>
    </location>
    <ligand>
        <name>Mg(2+)</name>
        <dbReference type="ChEBI" id="CHEBI:18420"/>
    </ligand>
</feature>
<feature type="binding site" evidence="1">
    <location>
        <begin position="272"/>
        <end position="284"/>
    </location>
    <ligand>
        <name>NAD(+)</name>
        <dbReference type="ChEBI" id="CHEBI:57540"/>
    </ligand>
</feature>
<feature type="site" description="Important for catalysis" evidence="1">
    <location>
        <position position="129"/>
    </location>
</feature>
<feature type="site" description="Important for catalysis" evidence="1">
    <location>
        <position position="179"/>
    </location>
</feature>
<name>LEU3_CORGB</name>
<gene>
    <name evidence="1" type="primary">leuB</name>
    <name type="ordered locus">cgR_1364</name>
</gene>
<organism>
    <name type="scientific">Corynebacterium glutamicum (strain R)</name>
    <dbReference type="NCBI Taxonomy" id="340322"/>
    <lineage>
        <taxon>Bacteria</taxon>
        <taxon>Bacillati</taxon>
        <taxon>Actinomycetota</taxon>
        <taxon>Actinomycetes</taxon>
        <taxon>Mycobacteriales</taxon>
        <taxon>Corynebacteriaceae</taxon>
        <taxon>Corynebacterium</taxon>
    </lineage>
</organism>
<keyword id="KW-0028">Amino-acid biosynthesis</keyword>
<keyword id="KW-0100">Branched-chain amino acid biosynthesis</keyword>
<keyword id="KW-0963">Cytoplasm</keyword>
<keyword id="KW-0432">Leucine biosynthesis</keyword>
<keyword id="KW-0460">Magnesium</keyword>
<keyword id="KW-0464">Manganese</keyword>
<keyword id="KW-0479">Metal-binding</keyword>
<keyword id="KW-0520">NAD</keyword>
<keyword id="KW-0560">Oxidoreductase</keyword>